<protein>
    <recommendedName>
        <fullName evidence="1">Large ribosomal subunit protein uL18</fullName>
    </recommendedName>
    <alternativeName>
        <fullName evidence="2">50S ribosomal protein L18</fullName>
    </alternativeName>
</protein>
<organism>
    <name type="scientific">Citrifermentans bemidjiense (strain ATCC BAA-1014 / DSM 16622 / JCM 12645 / Bem)</name>
    <name type="common">Geobacter bemidjiensis</name>
    <dbReference type="NCBI Taxonomy" id="404380"/>
    <lineage>
        <taxon>Bacteria</taxon>
        <taxon>Pseudomonadati</taxon>
        <taxon>Thermodesulfobacteriota</taxon>
        <taxon>Desulfuromonadia</taxon>
        <taxon>Geobacterales</taxon>
        <taxon>Geobacteraceae</taxon>
        <taxon>Citrifermentans</taxon>
    </lineage>
</organism>
<accession>B5EFR6</accession>
<dbReference type="EMBL" id="CP001124">
    <property type="protein sequence ID" value="ACH37970.1"/>
    <property type="molecule type" value="Genomic_DNA"/>
</dbReference>
<dbReference type="RefSeq" id="WP_012529382.1">
    <property type="nucleotide sequence ID" value="NC_011146.1"/>
</dbReference>
<dbReference type="SMR" id="B5EFR6"/>
<dbReference type="STRING" id="404380.Gbem_0949"/>
<dbReference type="KEGG" id="gbm:Gbem_0949"/>
<dbReference type="eggNOG" id="COG0256">
    <property type="taxonomic scope" value="Bacteria"/>
</dbReference>
<dbReference type="HOGENOM" id="CLU_098841_0_1_7"/>
<dbReference type="OrthoDB" id="9810939at2"/>
<dbReference type="Proteomes" id="UP000008825">
    <property type="component" value="Chromosome"/>
</dbReference>
<dbReference type="GO" id="GO:0022625">
    <property type="term" value="C:cytosolic large ribosomal subunit"/>
    <property type="evidence" value="ECO:0007669"/>
    <property type="project" value="TreeGrafter"/>
</dbReference>
<dbReference type="GO" id="GO:0008097">
    <property type="term" value="F:5S rRNA binding"/>
    <property type="evidence" value="ECO:0007669"/>
    <property type="project" value="TreeGrafter"/>
</dbReference>
<dbReference type="GO" id="GO:0003735">
    <property type="term" value="F:structural constituent of ribosome"/>
    <property type="evidence" value="ECO:0007669"/>
    <property type="project" value="InterPro"/>
</dbReference>
<dbReference type="GO" id="GO:0006412">
    <property type="term" value="P:translation"/>
    <property type="evidence" value="ECO:0007669"/>
    <property type="project" value="UniProtKB-UniRule"/>
</dbReference>
<dbReference type="CDD" id="cd00432">
    <property type="entry name" value="Ribosomal_L18_L5e"/>
    <property type="match status" value="1"/>
</dbReference>
<dbReference type="FunFam" id="3.30.420.100:FF:000001">
    <property type="entry name" value="50S ribosomal protein L18"/>
    <property type="match status" value="1"/>
</dbReference>
<dbReference type="Gene3D" id="3.30.420.100">
    <property type="match status" value="1"/>
</dbReference>
<dbReference type="HAMAP" id="MF_01337_B">
    <property type="entry name" value="Ribosomal_uL18_B"/>
    <property type="match status" value="1"/>
</dbReference>
<dbReference type="InterPro" id="IPR004389">
    <property type="entry name" value="Ribosomal_uL18_bac-type"/>
</dbReference>
<dbReference type="InterPro" id="IPR005484">
    <property type="entry name" value="Ribosomal_uL18_bac/euk"/>
</dbReference>
<dbReference type="NCBIfam" id="TIGR00060">
    <property type="entry name" value="L18_bact"/>
    <property type="match status" value="1"/>
</dbReference>
<dbReference type="PANTHER" id="PTHR12899">
    <property type="entry name" value="39S RIBOSOMAL PROTEIN L18, MITOCHONDRIAL"/>
    <property type="match status" value="1"/>
</dbReference>
<dbReference type="PANTHER" id="PTHR12899:SF3">
    <property type="entry name" value="LARGE RIBOSOMAL SUBUNIT PROTEIN UL18M"/>
    <property type="match status" value="1"/>
</dbReference>
<dbReference type="Pfam" id="PF00861">
    <property type="entry name" value="Ribosomal_L18p"/>
    <property type="match status" value="1"/>
</dbReference>
<dbReference type="SUPFAM" id="SSF53137">
    <property type="entry name" value="Translational machinery components"/>
    <property type="match status" value="1"/>
</dbReference>
<proteinExistence type="inferred from homology"/>
<keyword id="KW-1185">Reference proteome</keyword>
<keyword id="KW-0687">Ribonucleoprotein</keyword>
<keyword id="KW-0689">Ribosomal protein</keyword>
<keyword id="KW-0694">RNA-binding</keyword>
<keyword id="KW-0699">rRNA-binding</keyword>
<feature type="chain" id="PRO_1000142670" description="Large ribosomal subunit protein uL18">
    <location>
        <begin position="1"/>
        <end position="122"/>
    </location>
</feature>
<comment type="function">
    <text evidence="1">This is one of the proteins that bind and probably mediate the attachment of the 5S RNA into the large ribosomal subunit, where it forms part of the central protuberance.</text>
</comment>
<comment type="subunit">
    <text evidence="1">Part of the 50S ribosomal subunit; part of the 5S rRNA/L5/L18/L25 subcomplex. Contacts the 5S and 23S rRNAs.</text>
</comment>
<comment type="similarity">
    <text evidence="1">Belongs to the universal ribosomal protein uL18 family.</text>
</comment>
<gene>
    <name evidence="1" type="primary">rplR</name>
    <name type="ordered locus">Gbem_0949</name>
</gene>
<sequence length="122" mass="13001">MSSLAQKQVARLKRQTRVRKKITGSPARPRLNVFKSARHIYAQLIDDTTGATLASASTLAGDVAEGLSYTGNAEAAAKVGAAIAKKALEKEITAVVFDRNGFLYHGRIKALADAARENGLSF</sequence>
<reference key="1">
    <citation type="submission" date="2008-07" db="EMBL/GenBank/DDBJ databases">
        <title>Complete sequence of Geobacter bemidjiensis BEM.</title>
        <authorList>
            <consortium name="US DOE Joint Genome Institute"/>
            <person name="Lucas S."/>
            <person name="Copeland A."/>
            <person name="Lapidus A."/>
            <person name="Glavina del Rio T."/>
            <person name="Dalin E."/>
            <person name="Tice H."/>
            <person name="Bruce D."/>
            <person name="Goodwin L."/>
            <person name="Pitluck S."/>
            <person name="Kiss H."/>
            <person name="Brettin T."/>
            <person name="Detter J.C."/>
            <person name="Han C."/>
            <person name="Kuske C.R."/>
            <person name="Schmutz J."/>
            <person name="Larimer F."/>
            <person name="Land M."/>
            <person name="Hauser L."/>
            <person name="Kyrpides N."/>
            <person name="Lykidis A."/>
            <person name="Lovley D."/>
            <person name="Richardson P."/>
        </authorList>
    </citation>
    <scope>NUCLEOTIDE SEQUENCE [LARGE SCALE GENOMIC DNA]</scope>
    <source>
        <strain>ATCC BAA-1014 / DSM 16622 / JCM 12645 / Bem</strain>
    </source>
</reference>
<evidence type="ECO:0000255" key="1">
    <source>
        <dbReference type="HAMAP-Rule" id="MF_01337"/>
    </source>
</evidence>
<evidence type="ECO:0000305" key="2"/>
<name>RL18_CITBB</name>